<protein>
    <recommendedName>
        <fullName>Structural polyprotein</fullName>
    </recommendedName>
    <alternativeName>
        <fullName>p130</fullName>
    </alternativeName>
    <component>
        <recommendedName>
            <fullName>Capsid protein</fullName>
            <ecNumber evidence="2">3.4.21.90</ecNumber>
        </recommendedName>
        <alternativeName>
            <fullName>Coat protein</fullName>
            <shortName>C</shortName>
        </alternativeName>
    </component>
    <component>
        <recommendedName>
            <fullName>Precursor of protein E3/E2</fullName>
        </recommendedName>
        <alternativeName>
            <fullName>p62</fullName>
        </alternativeName>
        <alternativeName>
            <fullName>pE2</fullName>
        </alternativeName>
    </component>
    <component>
        <recommendedName>
            <fullName>Assembly protein E3</fullName>
        </recommendedName>
    </component>
    <component>
        <recommendedName>
            <fullName>Spike glycoprotein E2</fullName>
        </recommendedName>
        <alternativeName>
            <fullName>E2 envelope glycoprotein</fullName>
        </alternativeName>
    </component>
    <component>
        <recommendedName>
            <fullName>6K protein</fullName>
        </recommendedName>
    </component>
    <component>
        <recommendedName>
            <fullName>Spike glycoprotein E1</fullName>
        </recommendedName>
        <alternativeName>
            <fullName>E1 envelope glycoprotein</fullName>
        </alternativeName>
    </component>
</protein>
<organism>
    <name type="scientific">Eastern equine encephalitis virus (strain va33[ten broeck])</name>
    <name type="common">EEEV</name>
    <name type="synonym">Eastern equine encephalomyelitis virus</name>
    <dbReference type="NCBI Taxonomy" id="11022"/>
    <lineage>
        <taxon>Viruses</taxon>
        <taxon>Riboviria</taxon>
        <taxon>Orthornavirae</taxon>
        <taxon>Kitrinoviricota</taxon>
        <taxon>Alsuviricetes</taxon>
        <taxon>Martellivirales</taxon>
        <taxon>Togaviridae</taxon>
        <taxon>Alphavirus</taxon>
        <taxon>Eastern equine encephalitis virus</taxon>
    </lineage>
</organism>
<name>POLS_EEEV3</name>
<keyword id="KW-0002">3D-structure</keyword>
<keyword id="KW-0167">Capsid protein</keyword>
<keyword id="KW-0165">Cleavage on pair of basic residues</keyword>
<keyword id="KW-1015">Disulfide bond</keyword>
<keyword id="KW-1262">Eukaryotic host gene expression shutoff by virus</keyword>
<keyword id="KW-1191">Eukaryotic host transcription shutoff by virus</keyword>
<keyword id="KW-1170">Fusion of virus membrane with host endosomal membrane</keyword>
<keyword id="KW-1168">Fusion of virus membrane with host membrane</keyword>
<keyword id="KW-0325">Glycoprotein</keyword>
<keyword id="KW-1032">Host cell membrane</keyword>
<keyword id="KW-1035">Host cytoplasm</keyword>
<keyword id="KW-1190">Host gene expression shutoff by virus</keyword>
<keyword id="KW-1043">Host membrane</keyword>
<keyword id="KW-1048">Host nucleus</keyword>
<keyword id="KW-0945">Host-virus interaction</keyword>
<keyword id="KW-0378">Hydrolase</keyword>
<keyword id="KW-0449">Lipoprotein</keyword>
<keyword id="KW-0472">Membrane</keyword>
<keyword id="KW-0564">Palmitate</keyword>
<keyword id="KW-0597">Phosphoprotein</keyword>
<keyword id="KW-0645">Protease</keyword>
<keyword id="KW-0694">RNA-binding</keyword>
<keyword id="KW-0720">Serine protease</keyword>
<keyword id="KW-1144">T=4 icosahedral capsid protein</keyword>
<keyword id="KW-0812">Transmembrane</keyword>
<keyword id="KW-1133">Transmembrane helix</keyword>
<keyword id="KW-1161">Viral attachment to host cell</keyword>
<keyword id="KW-1162">Viral penetration into host cytoplasm</keyword>
<keyword id="KW-0946">Virion</keyword>
<keyword id="KW-1160">Virus entry into host cell</keyword>
<organismHost>
    <name type="scientific">Aedes</name>
    <dbReference type="NCBI Taxonomy" id="7158"/>
</organismHost>
<organismHost>
    <name type="scientific">Homo sapiens</name>
    <name type="common">Human</name>
    <dbReference type="NCBI Taxonomy" id="9606"/>
</organismHost>
<organismHost>
    <name type="scientific">Passeriformes</name>
    <dbReference type="NCBI Taxonomy" id="9126"/>
</organismHost>
<comment type="function">
    <molecule>Capsid protein</molecule>
    <text evidence="2 3 4 10">Forms an icosahedral capsid with a T=4 symmetry composed of 240 copies of the capsid protein surrounded by a lipid membrane through which penetrate 80 spikes composed of trimers of E1-E2 heterodimers (By similarity). The capsid protein binds to the viral RNA genome at a site adjacent to a ribosome binding site for viral genome translation following genome release (PubMed:30540945). Possesses a protease activity that results in its autocatalytic cleavage from the nascent structural protein (By similarity). Following its self-cleavage, the capsid protein transiently associates with ribosomes, and within several minutes the protein binds to viral RNA and rapidly assembles into icosahedric core particles (By similarity). The resulting nucleocapsid eventually associates with the cytoplasmic domain of the spike glycoprotein E2 at the cell membrane, leading to budding and formation of mature virions (By similarity). In case of infection, new virions attach to target cells and after clathrin-mediated endocytosis their membrane fuses with the host endosomal membrane (By similarity). This leads to the release of the nucleocapsid into the cytoplasm, followed by an uncoating event necessary for the genomic RNA to become accessible (By similarity). The uncoating might be triggered by the interaction of capsid proteins with ribosomes (By similarity). Binding of ribosomes would release the genomic RNA since the same region is genomic RNA-binding and ribosome-binding (By similarity). Specifically inhibits interleukin-1 receptor-associated kinase 1/IRAK1-dependent signaling during viral entry, representing a means by which the alphaviruses may evade innate immune detection and activation prior to viral gene expression (By similarity). Inhibits host transcription (By similarity). Forms a tetrameric complex with XPO1/CRM1 and the nuclear import receptor importin (By similarity). This complex blocks the central channel of host nuclear pores thereby inhibiting the receptor-mediated nuclear transport and thus the host mRNA and rRNA transcription (By similarity). The inhibition of transcription is linked to a cytopathic effect on the host cell (By similarity).</text>
</comment>
<comment type="function">
    <molecule>Assembly protein E3</molecule>
    <text evidence="2">Provides the signal sequence for the translocation of the precursor of protein E3/E2 to the host endoplasmic reticulum. Furin-cleaved E3 remains associated with spike glycoprotein E1 and mediates pH protection of the latter during the transport via the secretory pathway. After virion release from the host cell, the assembly protein E3 is gradually released in the extracellular space.</text>
</comment>
<comment type="function">
    <molecule>Spike glycoprotein E2</molecule>
    <text evidence="2">Plays a role in viral attachment to target host cell, by binding to the cell receptor. Synthesized as a p62 precursor which is processed by furin at the cell membrane just before virion budding, giving rise to E2-E1 heterodimer. The p62-E1 heterodimer is stable, whereas E2-E1 is unstable and dissociate at low pH. p62 is processed at the last step, presumably to avoid E1 fusion activation before its final export to cell surface. E2 C-terminus contains a transitory transmembrane that would be disrupted by palmitoylation, resulting in reorientation of the C-terminal tail from lumenal to cytoplasmic side. This step is critical since E2 C-terminus is involved in budding by interacting with capsid proteins. This release of E2 C-terminus in cytoplasm occurs lately in protein export, and precludes premature assembly of particles at the endoplasmic reticulum membrane.</text>
</comment>
<comment type="function">
    <molecule>6K protein</molecule>
    <text evidence="2">Constitutive membrane protein involved in virus glycoprotein processing, cell permeabilization, and the budding of viral particles. Disrupts the calcium homeostasis of the cell, probably at the endoplasmic reticulum level. This leads to cytoplasmic calcium elevation. Because of its lipophilic properties, the 6K protein is postulated to influence the selection of lipids that interact with the transmembrane domains of the glycoproteins, which, in turn, affects the deformability of the bilayer required for the extreme curvature that occurs as budding proceeds. Present in low amount in virions, about 3% compared to viral glycoproteins.</text>
</comment>
<comment type="function">
    <molecule>Spike glycoprotein E1</molecule>
    <text evidence="2">Class II viral fusion protein. Fusion activity is inactive as long as E1 is bound to E2 in mature virion. After virus attachment to target cell and endocytosis, acidification of the endosome would induce dissociation of E1/E2 heterodimer and concomitant trimerization of the E1 subunits. This E1 trimer is fusion active, and promotes release of viral nucleocapsid in cytoplasm after endosome and viral membrane fusion. Efficient fusion requires the presence of cholesterol and sphingolipid in the target membrane. Fusion is optimal at levels of about 1 molecule of cholesterol per 2 molecules of phospholipids, and is specific for sterols containing a 3-beta-hydroxyl group.</text>
</comment>
<comment type="catalytic activity">
    <reaction evidence="3">
        <text>Autocatalytic release of the core protein from the N-terminus of the togavirus structural polyprotein by hydrolysis of a -Trp-|-Ser- bond.</text>
        <dbReference type="EC" id="3.4.21.90"/>
    </reaction>
</comment>
<comment type="subunit">
    <molecule>Capsid protein</molecule>
    <text evidence="2 3 4 6">Part of a tetrameric complex composed of host CRM1, host importin alpha/beta dimer and the viral capsid; this complex blocks the receptor-mediated transport through the nuclear pore (By similarity). Interacts with host phosphatase PPP1CA; this interaction dephosphorylates the capsid protein, which increases its ability to bind to the viral genome (By similarity). Interacts with host karyopherin KPNA4; this interaction allows the nuclear import of the viral capsid protein (By similarity). Interacts with spike glycoprotein E2 (By similarity). Interacts with host IRAK1; the interaction leads to inhibition of IRAK1-dependent signaling (By similarity).</text>
</comment>
<comment type="subunit">
    <molecule>Precursor of protein E3/E2</molecule>
    <text evidence="2 3 4">The precursor of protein E3/E2 and E1 form a heterodimer shortly after synthesis.</text>
</comment>
<comment type="subunit">
    <molecule>Spike glycoprotein E1</molecule>
    <text evidence="2 3 4">The precursor of protein E3/E2 and E1 form a heterodimer shortly after synthesis (By similarity). Processing of the precursor of protein E3/E2 into E2 and E3 results in a heterodimer of the spike glycoproteins E2 and E1 (By similarity). Spike at virion surface are constituted of three E2-E1 heterodimers (By similarity). After target cell attachment and endocytosis, E1 change conformation to form homotrimers (By similarity). Interacts with 6K protein (By similarity).</text>
</comment>
<comment type="subunit">
    <molecule>Spike glycoprotein E2</molecule>
    <text evidence="2 3 4">Processing of the precursor of protein E3/E2 into E2 and E3 results in a heterodimer of the spike glycoproteins E2 and E1 (By similarity). Spike at virion surface are constituted of three E2-E1 heterodimers (By similarity). Interacts with 6K protein (By similarity).</text>
</comment>
<comment type="subunit">
    <molecule>6K protein</molecule>
    <text evidence="2 3 4">Interacts with spike glycoprotein E1 (By similarity). Interacts with spike glycoprotein E2 (By similarity).</text>
</comment>
<comment type="subcellular location">
    <molecule>Capsid protein</molecule>
    <subcellularLocation>
        <location evidence="3">Virion</location>
    </subcellularLocation>
    <subcellularLocation>
        <location evidence="4">Host cytoplasm</location>
    </subcellularLocation>
    <subcellularLocation>
        <location evidence="3">Host cell membrane</location>
    </subcellularLocation>
    <subcellularLocation>
        <location evidence="4">Host nucleus</location>
    </subcellularLocation>
</comment>
<comment type="subcellular location">
    <molecule>Spike glycoprotein E2</molecule>
    <subcellularLocation>
        <location evidence="6">Virion membrane</location>
        <topology evidence="7">Single-pass type I membrane protein</topology>
    </subcellularLocation>
    <subcellularLocation>
        <location evidence="3">Host cell membrane</location>
        <topology evidence="6">Single-pass type I membrane protein</topology>
    </subcellularLocation>
</comment>
<comment type="subcellular location">
    <molecule>6K protein</molecule>
    <subcellularLocation>
        <location evidence="3">Host cell membrane</location>
        <topology evidence="7">Multi-pass membrane protein</topology>
    </subcellularLocation>
    <subcellularLocation>
        <location evidence="3">Virion membrane</location>
        <topology evidence="7">Multi-pass membrane protein</topology>
    </subcellularLocation>
</comment>
<comment type="subcellular location">
    <molecule>Spike glycoprotein E1</molecule>
    <subcellularLocation>
        <location evidence="6">Virion membrane</location>
        <topology evidence="7">Single-pass type I membrane protein</topology>
    </subcellularLocation>
    <subcellularLocation>
        <location evidence="3 6">Host cell membrane</location>
        <topology evidence="7">Single-pass type I membrane protein</topology>
    </subcellularLocation>
</comment>
<comment type="domain">
    <text evidence="2">Structural polyprotein: As soon as the capsid protein has been autocleaved, an internal uncleaved signal peptide directs the remaining polyprotein to the endoplasmic reticulum.</text>
</comment>
<comment type="domain">
    <molecule>Capsid protein</molecule>
    <text evidence="3 4">The very N-terminus plays a role in the particle assembly process (By similarity). The N-terminus also contains a nuclear localization signal and a supraphysiological nuclear export signal (supraNES), which is an unusually strong NES that mediates host CRM1 binding in the absence of RanGTP and thus can bind CRM1, not only in the nucleus, but also in the cytoplasm (By similarity). The C-terminus functions as a protease during translation to cleave itself from the translating structural polyprotein (By similarity).</text>
</comment>
<comment type="PTM">
    <text evidence="2">Structural polyprotein: Specific enzymatic cleavages in vivo yield mature proteins. Capsid protein is auto-cleaved during polyprotein translation, unmasking a signal peptide at the N-terminus of the precursor of E3/E2. The remaining polyprotein is then targeted to the host endoplasmic reticulum, where host signal peptidase cleaves it into pE2, 6K and E1 proteins. pE2 is further processed to mature E3 and E2 by host furin in trans-Golgi vesicle.</text>
</comment>
<comment type="PTM">
    <molecule>Capsid protein</molecule>
    <text evidence="4">Phosphorylated on serine and threonine residues.</text>
</comment>
<comment type="PTM">
    <molecule>Spike glycoprotein E2</molecule>
    <text evidence="2">Palmitoylated via thioester bonds. These palmitoylations may induce disruption of the C-terminus transmembrane. This would result in the reorientation of E2 C-terminus from lumenal to cytoplasmic side.</text>
</comment>
<comment type="PTM">
    <molecule>Spike glycoprotein E1</molecule>
    <text evidence="2">N-glycosylated.</text>
</comment>
<comment type="PTM">
    <molecule>Spike glycoprotein E2</molecule>
    <text evidence="2">N-glycosylated.</text>
</comment>
<comment type="PTM">
    <molecule>Assembly protein E3</molecule>
    <text evidence="2">N-glycosylated.</text>
</comment>
<comment type="PTM">
    <molecule>6K protein</molecule>
    <text evidence="2">Palmitoylated via thioester bonds.</text>
</comment>
<comment type="miscellaneous">
    <text evidence="5">Structural polyprotein: Translated from a subgenomic RNA synthesized during togavirus replication.</text>
</comment>
<feature type="chain" id="PRO_0000041246" description="Capsid protein" evidence="1">
    <location>
        <begin position="1"/>
        <end position="260"/>
    </location>
</feature>
<feature type="chain" id="PRO_0000234317" description="Precursor of protein E3/E2" evidence="1">
    <location>
        <begin position="261"/>
        <end position="743"/>
    </location>
</feature>
<feature type="chain" id="PRO_0000041247" description="Assembly protein E3" evidence="1">
    <location>
        <begin position="261"/>
        <end position="323"/>
    </location>
</feature>
<feature type="chain" id="PRO_0000041248" description="Spike glycoprotein E2" evidence="1">
    <location>
        <begin position="324"/>
        <end position="743"/>
    </location>
</feature>
<feature type="chain" id="PRO_0000041249" description="6K protein" evidence="1">
    <location>
        <begin position="744"/>
        <end position="799"/>
    </location>
</feature>
<feature type="chain" id="PRO_0000041250" description="Spike glycoprotein E1" evidence="1">
    <location>
        <begin position="800"/>
        <end position="1240"/>
    </location>
</feature>
<feature type="topological domain" description="Extracellular" evidence="7">
    <location>
        <begin position="261"/>
        <end position="682"/>
    </location>
</feature>
<feature type="transmembrane region" description="Helical" evidence="7">
    <location>
        <begin position="683"/>
        <end position="703"/>
    </location>
</feature>
<feature type="topological domain" description="Cytoplasmic" evidence="7">
    <location>
        <begin position="704"/>
        <end position="743"/>
    </location>
</feature>
<feature type="topological domain" description="Extracellular" evidence="7">
    <location>
        <begin position="744"/>
        <end position="758"/>
    </location>
</feature>
<feature type="transmembrane region" description="Helical" evidence="7">
    <location>
        <begin position="759"/>
        <end position="779"/>
    </location>
</feature>
<feature type="topological domain" description="Cytoplasmic" evidence="7">
    <location>
        <position position="780"/>
    </location>
</feature>
<feature type="transmembrane region" description="Helical" evidence="7">
    <location>
        <begin position="781"/>
        <end position="801"/>
    </location>
</feature>
<feature type="topological domain" description="Extracellular" evidence="7">
    <location>
        <begin position="802"/>
        <end position="1216"/>
    </location>
</feature>
<feature type="transmembrane region" description="Helical" evidence="7">
    <location>
        <begin position="1217"/>
        <end position="1237"/>
    </location>
</feature>
<feature type="topological domain" description="Cytoplasmic" evidence="7">
    <location>
        <begin position="1238"/>
        <end position="1240"/>
    </location>
</feature>
<feature type="domain" description="Peptidase S3" evidence="8">
    <location>
        <begin position="111"/>
        <end position="260"/>
    </location>
</feature>
<feature type="region of interest" description="Disordered" evidence="9">
    <location>
        <begin position="1"/>
        <end position="102"/>
    </location>
</feature>
<feature type="region of interest" description="Necessary for nucleocapsid assembly and virus assembly" evidence="4">
    <location>
        <begin position="1"/>
        <end position="35"/>
    </location>
</feature>
<feature type="region of interest" description="Host transcription inhibition" evidence="4">
    <location>
        <begin position="36"/>
        <end position="69"/>
    </location>
</feature>
<feature type="region of interest" description="Binding to the viral RNA" evidence="10">
    <location>
        <begin position="82"/>
        <end position="112"/>
    </location>
</feature>
<feature type="region of interest" description="Ribosome-binding" evidence="10">
    <location>
        <begin position="97"/>
        <end position="111"/>
    </location>
</feature>
<feature type="region of interest" description="Functions as an uncleaved signal peptide for the precursor of protein E3/E2" evidence="2">
    <location>
        <begin position="261"/>
        <end position="272"/>
    </location>
</feature>
<feature type="region of interest" description="Transient transmembrane before p62-6K protein processing" evidence="7">
    <location>
        <begin position="715"/>
        <end position="735"/>
    </location>
</feature>
<feature type="region of interest" description="E1 fusion peptide loop" evidence="6">
    <location>
        <begin position="883"/>
        <end position="900"/>
    </location>
</feature>
<feature type="short sequence motif" description="Supraphysiological nuclear export signal" evidence="4">
    <location>
        <begin position="43"/>
        <end position="50"/>
    </location>
</feature>
<feature type="short sequence motif" description="Nuclear localization signal" evidence="4">
    <location>
        <begin position="66"/>
        <end position="70"/>
    </location>
</feature>
<feature type="compositionally biased region" description="Pro residues" evidence="9">
    <location>
        <begin position="23"/>
        <end position="34"/>
    </location>
</feature>
<feature type="compositionally biased region" description="Basic residues" evidence="9">
    <location>
        <begin position="65"/>
        <end position="102"/>
    </location>
</feature>
<feature type="active site" description="Charge relay system" evidence="8">
    <location>
        <position position="137"/>
    </location>
</feature>
<feature type="active site" description="Charge relay system" evidence="8">
    <location>
        <position position="159"/>
    </location>
</feature>
<feature type="active site" description="Charge relay system" evidence="8">
    <location>
        <position position="211"/>
    </location>
</feature>
<feature type="site" description="Involved in dimerization of the capsid protein" evidence="5">
    <location>
        <position position="185"/>
    </location>
</feature>
<feature type="site" description="Involved in dimerization of the capsid protein" evidence="5">
    <location>
        <position position="218"/>
    </location>
</feature>
<feature type="site" description="Cleavage; by autolysis" evidence="2">
    <location>
        <begin position="260"/>
        <end position="261"/>
    </location>
</feature>
<feature type="site" description="Cleavage; by host furin" evidence="1">
    <location>
        <begin position="323"/>
        <end position="324"/>
    </location>
</feature>
<feature type="site" description="Cleavage; by host signal peptidase" evidence="1">
    <location>
        <begin position="743"/>
        <end position="744"/>
    </location>
</feature>
<feature type="site" description="Cleavage; by host signal peptidase" evidence="1">
    <location>
        <begin position="799"/>
        <end position="800"/>
    </location>
</feature>
<feature type="modified residue" description="Phosphoserine" evidence="4">
    <location>
        <position position="109"/>
    </location>
</feature>
<feature type="modified residue" description="Phosphothreonine" evidence="4">
    <location>
        <position position="112"/>
    </location>
</feature>
<feature type="lipid moiety-binding region" description="S-palmitoyl cysteine; by host" evidence="7">
    <location>
        <position position="706"/>
    </location>
</feature>
<feature type="lipid moiety-binding region" description="S-palmitoyl cysteine; by host" evidence="1">
    <location>
        <position position="716"/>
    </location>
</feature>
<feature type="lipid moiety-binding region" description="S-palmitoyl cysteine; by host" evidence="1">
    <location>
        <position position="736"/>
    </location>
</feature>
<feature type="lipid moiety-binding region" description="S-palmitoyl cysteine; by host" evidence="1">
    <location>
        <position position="737"/>
    </location>
</feature>
<feature type="glycosylation site" description="N-linked (GlcNAc...) asparagine; by host" evidence="7">
    <location>
        <position position="49"/>
    </location>
</feature>
<feature type="glycosylation site" description="N-linked (GlcNAc...) asparagine; by host" evidence="7">
    <location>
        <position position="271"/>
    </location>
</feature>
<feature type="glycosylation site" description="N-linked (GlcNAc...) asparagine; by host" evidence="7">
    <location>
        <position position="638"/>
    </location>
</feature>
<feature type="glycosylation site" description="N-linked (GlcNAc...) asparagine; by host" evidence="7">
    <location>
        <position position="834"/>
    </location>
</feature>
<feature type="glycosylation site" description="N-linked (GlcNAc...) asparagine; by host" evidence="7">
    <location>
        <position position="933"/>
    </location>
</feature>
<feature type="disulfide bond" evidence="1">
    <location>
        <begin position="848"/>
        <end position="913"/>
    </location>
</feature>
<feature type="disulfide bond" evidence="1">
    <location>
        <begin position="861"/>
        <end position="893"/>
    </location>
</feature>
<feature type="disulfide bond" evidence="1">
    <location>
        <begin position="862"/>
        <end position="895"/>
    </location>
</feature>
<feature type="disulfide bond" evidence="1">
    <location>
        <begin position="867"/>
        <end position="877"/>
    </location>
</feature>
<feature type="disulfide bond" evidence="1">
    <location>
        <begin position="1059"/>
        <end position="1071"/>
    </location>
</feature>
<feature type="disulfide bond" evidence="1">
    <location>
        <begin position="1101"/>
        <end position="1176"/>
    </location>
</feature>
<feature type="disulfide bond" evidence="1">
    <location>
        <begin position="1106"/>
        <end position="1180"/>
    </location>
</feature>
<accession>P27284</accession>
<dbReference type="EC" id="3.4.21.90" evidence="2"/>
<dbReference type="EMBL" id="M69094">
    <property type="protein sequence ID" value="AAA42980.1"/>
    <property type="molecule type" value="Genomic_RNA"/>
</dbReference>
<dbReference type="PIR" id="A39992">
    <property type="entry name" value="VHWVEV"/>
</dbReference>
<dbReference type="PDB" id="6MX4">
    <property type="method" value="EM"/>
    <property type="resolution" value="4.40 A"/>
    <property type="chains" value="C/F/I/L=1-260"/>
</dbReference>
<dbReference type="PDB" id="6MX7">
    <property type="method" value="EM"/>
    <property type="resolution" value="4.80 A"/>
    <property type="chains" value="C/F/I/L=1-260"/>
</dbReference>
<dbReference type="PDBsum" id="6MX4"/>
<dbReference type="PDBsum" id="6MX7"/>
<dbReference type="EMDB" id="EMD-9280"/>
<dbReference type="EMDB" id="EMD-9281"/>
<dbReference type="SMR" id="P27284"/>
<dbReference type="MEROPS" id="S03.001"/>
<dbReference type="GO" id="GO:0030430">
    <property type="term" value="C:host cell cytoplasm"/>
    <property type="evidence" value="ECO:0007669"/>
    <property type="project" value="UniProtKB-SubCell"/>
</dbReference>
<dbReference type="GO" id="GO:0042025">
    <property type="term" value="C:host cell nucleus"/>
    <property type="evidence" value="ECO:0007669"/>
    <property type="project" value="UniProtKB-SubCell"/>
</dbReference>
<dbReference type="GO" id="GO:0020002">
    <property type="term" value="C:host cell plasma membrane"/>
    <property type="evidence" value="ECO:0007669"/>
    <property type="project" value="UniProtKB-SubCell"/>
</dbReference>
<dbReference type="GO" id="GO:0016020">
    <property type="term" value="C:membrane"/>
    <property type="evidence" value="ECO:0007669"/>
    <property type="project" value="UniProtKB-KW"/>
</dbReference>
<dbReference type="GO" id="GO:0039619">
    <property type="term" value="C:T=4 icosahedral viral capsid"/>
    <property type="evidence" value="ECO:0007669"/>
    <property type="project" value="UniProtKB-KW"/>
</dbReference>
<dbReference type="GO" id="GO:0055036">
    <property type="term" value="C:virion membrane"/>
    <property type="evidence" value="ECO:0007669"/>
    <property type="project" value="UniProtKB-SubCell"/>
</dbReference>
<dbReference type="GO" id="GO:0003723">
    <property type="term" value="F:RNA binding"/>
    <property type="evidence" value="ECO:0007669"/>
    <property type="project" value="UniProtKB-KW"/>
</dbReference>
<dbReference type="GO" id="GO:0004252">
    <property type="term" value="F:serine-type endopeptidase activity"/>
    <property type="evidence" value="ECO:0007669"/>
    <property type="project" value="InterPro"/>
</dbReference>
<dbReference type="GO" id="GO:0005198">
    <property type="term" value="F:structural molecule activity"/>
    <property type="evidence" value="ECO:0007669"/>
    <property type="project" value="InterPro"/>
</dbReference>
<dbReference type="GO" id="GO:0039654">
    <property type="term" value="P:fusion of virus membrane with host endosome membrane"/>
    <property type="evidence" value="ECO:0007669"/>
    <property type="project" value="UniProtKB-KW"/>
</dbReference>
<dbReference type="GO" id="GO:0006508">
    <property type="term" value="P:proteolysis"/>
    <property type="evidence" value="ECO:0007669"/>
    <property type="project" value="UniProtKB-KW"/>
</dbReference>
<dbReference type="GO" id="GO:0046718">
    <property type="term" value="P:symbiont entry into host cell"/>
    <property type="evidence" value="ECO:0007669"/>
    <property type="project" value="UniProtKB-KW"/>
</dbReference>
<dbReference type="GO" id="GO:0039657">
    <property type="term" value="P:symbiont-mediated suppression of host gene expression"/>
    <property type="evidence" value="ECO:0007669"/>
    <property type="project" value="UniProtKB-KW"/>
</dbReference>
<dbReference type="GO" id="GO:0039722">
    <property type="term" value="P:symbiont-mediated suppression of host toll-like receptor signaling pathway"/>
    <property type="evidence" value="ECO:0000250"/>
    <property type="project" value="UniProtKB"/>
</dbReference>
<dbReference type="GO" id="GO:0019062">
    <property type="term" value="P:virion attachment to host cell"/>
    <property type="evidence" value="ECO:0007669"/>
    <property type="project" value="UniProtKB-KW"/>
</dbReference>
<dbReference type="FunFam" id="1.10.287.2230:FF:000001">
    <property type="entry name" value="Structural polyprotein"/>
    <property type="match status" value="1"/>
</dbReference>
<dbReference type="FunFam" id="2.40.10.10:FF:000075">
    <property type="entry name" value="Structural polyprotein"/>
    <property type="match status" value="1"/>
</dbReference>
<dbReference type="FunFam" id="2.40.10.10:FF:000076">
    <property type="entry name" value="Structural polyprotein"/>
    <property type="match status" value="1"/>
</dbReference>
<dbReference type="FunFam" id="2.60.40.2400:FF:000001">
    <property type="entry name" value="Structural polyprotein"/>
    <property type="match status" value="1"/>
</dbReference>
<dbReference type="FunFam" id="2.60.98.10:FF:000002">
    <property type="entry name" value="Structural polyprotein"/>
    <property type="match status" value="1"/>
</dbReference>
<dbReference type="FunFam" id="2.60.98.10:FF:000003">
    <property type="entry name" value="Structural polyprotein"/>
    <property type="match status" value="1"/>
</dbReference>
<dbReference type="Gene3D" id="1.10.287.2230">
    <property type="match status" value="1"/>
</dbReference>
<dbReference type="Gene3D" id="2.60.40.350">
    <property type="match status" value="1"/>
</dbReference>
<dbReference type="Gene3D" id="2.60.40.3200">
    <property type="entry name" value="Alphavirus E2 glycoprotein, A domain"/>
    <property type="match status" value="1"/>
</dbReference>
<dbReference type="Gene3D" id="2.60.40.4310">
    <property type="entry name" value="Alphavirus E2 glycoprotein, domain B"/>
    <property type="match status" value="1"/>
</dbReference>
<dbReference type="Gene3D" id="2.60.40.2400">
    <property type="entry name" value="Alphavirus E2 glycoprotein, domain C"/>
    <property type="match status" value="1"/>
</dbReference>
<dbReference type="Gene3D" id="2.60.98.10">
    <property type="entry name" value="Tick-borne Encephalitis virus Glycoprotein, domain 1"/>
    <property type="match status" value="3"/>
</dbReference>
<dbReference type="Gene3D" id="2.40.10.10">
    <property type="entry name" value="Trypsin-like serine proteases"/>
    <property type="match status" value="2"/>
</dbReference>
<dbReference type="InterPro" id="IPR002548">
    <property type="entry name" value="Alpha_E1_glycop"/>
</dbReference>
<dbReference type="InterPro" id="IPR000936">
    <property type="entry name" value="Alpha_E2_glycop"/>
</dbReference>
<dbReference type="InterPro" id="IPR002533">
    <property type="entry name" value="Alpha_E3_glycop"/>
</dbReference>
<dbReference type="InterPro" id="IPR042304">
    <property type="entry name" value="Alphavir_E2_A"/>
</dbReference>
<dbReference type="InterPro" id="IPR042305">
    <property type="entry name" value="Alphavir_E2_B"/>
</dbReference>
<dbReference type="InterPro" id="IPR042306">
    <property type="entry name" value="Alphavir_E2_C"/>
</dbReference>
<dbReference type="InterPro" id="IPR000336">
    <property type="entry name" value="Flavivir/Alphavir_Ig-like_sf"/>
</dbReference>
<dbReference type="InterPro" id="IPR036253">
    <property type="entry name" value="Glycoprot_cen/dimer_sf"/>
</dbReference>
<dbReference type="InterPro" id="IPR038055">
    <property type="entry name" value="Glycoprot_E_dimer_dom"/>
</dbReference>
<dbReference type="InterPro" id="IPR014756">
    <property type="entry name" value="Ig_E-set"/>
</dbReference>
<dbReference type="InterPro" id="IPR009003">
    <property type="entry name" value="Peptidase_S1_PA"/>
</dbReference>
<dbReference type="InterPro" id="IPR043504">
    <property type="entry name" value="Peptidase_S1_PA_chymotrypsin"/>
</dbReference>
<dbReference type="InterPro" id="IPR000930">
    <property type="entry name" value="Peptidase_S3"/>
</dbReference>
<dbReference type="Pfam" id="PF01589">
    <property type="entry name" value="Alpha_E1_glycop"/>
    <property type="match status" value="1"/>
</dbReference>
<dbReference type="Pfam" id="PF00943">
    <property type="entry name" value="Alpha_E2_glycop"/>
    <property type="match status" value="1"/>
</dbReference>
<dbReference type="Pfam" id="PF01563">
    <property type="entry name" value="Alpha_E3_glycop"/>
    <property type="match status" value="1"/>
</dbReference>
<dbReference type="Pfam" id="PF00944">
    <property type="entry name" value="Peptidase_S3"/>
    <property type="match status" value="1"/>
</dbReference>
<dbReference type="PRINTS" id="PR00798">
    <property type="entry name" value="TOGAVIRIN"/>
</dbReference>
<dbReference type="SUPFAM" id="SSF81296">
    <property type="entry name" value="E set domains"/>
    <property type="match status" value="1"/>
</dbReference>
<dbReference type="SUPFAM" id="SSF50494">
    <property type="entry name" value="Trypsin-like serine proteases"/>
    <property type="match status" value="1"/>
</dbReference>
<dbReference type="SUPFAM" id="SSF56983">
    <property type="entry name" value="Viral glycoprotein, central and dimerisation domains"/>
    <property type="match status" value="1"/>
</dbReference>
<dbReference type="PROSITE" id="PS51690">
    <property type="entry name" value="ALPHAVIRUS_CP"/>
    <property type="match status" value="1"/>
</dbReference>
<proteinExistence type="evidence at protein level"/>
<sequence>MFPYPTLNYPPMAPINPMAYRDPNPPRQVAPFRPPLAAQIEDLRRSIANLTLKQRAPNPPAGPPAKRKKPAPKPKPAQAKKKRPPPPAKKQKRKPKPGKRQRMCMKLESDKTFPIMLNGQVNGYACVVGGRVFKPLHVEGRIDNEQLAAIKLKKASIYDLEYGDVPQCMKSDTLQYTSDKPPGFYNWHHGAVQYENNRFTVPRGVGGKGDSGRPILDNKGRVVAIVLGGVNEGSRTALSVVTWNQKGVTVKDTPEGSEPWSLATVMCVLANITFPCDQPPCMPCCYEKNPHETLTMLEQNYDSRAYDQLLDAAVKCNARRTRRDLDTHFTQYKLARPYIADCPNCGHSRCDSPIAIEEVRGDAHAGVIRIQTSAMFGLKTDGVDLAYMSFMNGKTQKSIKIDNLHVRTSAPCSLVSHHGYYILAQCPPGDTVTVGFHDGPNRHTCTVAHKVEFRPVGREKYRHPPEHGVELPCNRYTHKRADQGHYVEMHQPGLVADHSLLSIHSAKVKITVPSGAQVKYYCKCPDVREGITSSDHTTTCTDVKQCRAYLIGNKKWVYNSGRLPRGEGDTFKGKLHVPFVPVKAKCIATLAPEPLVEHKHRTLILHLHPDHPTLLTTRSLGSDANPTRQWIERPTTVNFTVTGEGLEYTWGNHPPKRVWAQESGEGNPHGWPHEVVVYYYNRYPLTTIIGLCTCVAIIMVSCVHPCGSFAGLRNLCITPYKLAPNAQVPILLALLCCIKPTRADDTLQVLNYLWNNNQNFFWMQTLIPLAALIVCMRIVRCLFCCGPAFLLVCGAWAAAYEHTAVMPNKVGIPYKALVERPGYAPVHLQIQLVNTSIIPSTNLEYITCKYKTKVPSPVVKCCGATQCTSKPHPDYQCQVFTGVYPFMWGGAYCFCDTENTQMSEAYVERSEECSIDHAKAYKVHTGTVQAMVNITYGSVSWRSADVYVNGETPAKIGDAKLIIGPLSSAWSPFDNKVVVYGHEVYNYDFPEYGTGKAGSFGDLQSRTSTSNDLYANTNLKLQRPQAGIVHTPFTQAPSGFERWKRDKGAPLNDVAPFGCSIALEPLRAENCAVGSIPISIDIPDAAFTRISETPTVSDLECKITECTYASDFGGIATLPTNPVKQETVQFILHQVLQLLKRMTSPLLRAGSFTFHFSTANIHPAFKLQVCTSGVTCKGDCKPPKDHIVDYPAQHTESFTSAISATAWSWLKVLVGGTSAFIVLGLIATAVVALVLFFHRH</sequence>
<evidence type="ECO:0000250" key="1"/>
<evidence type="ECO:0000250" key="2">
    <source>
        <dbReference type="UniProtKB" id="P03315"/>
    </source>
</evidence>
<evidence type="ECO:0000250" key="3">
    <source>
        <dbReference type="UniProtKB" id="P03316"/>
    </source>
</evidence>
<evidence type="ECO:0000250" key="4">
    <source>
        <dbReference type="UniProtKB" id="P09592"/>
    </source>
</evidence>
<evidence type="ECO:0000250" key="5">
    <source>
        <dbReference type="UniProtKB" id="Q86925"/>
    </source>
</evidence>
<evidence type="ECO:0000250" key="6">
    <source>
        <dbReference type="UniProtKB" id="Q8JUX5"/>
    </source>
</evidence>
<evidence type="ECO:0000255" key="7"/>
<evidence type="ECO:0000255" key="8">
    <source>
        <dbReference type="PROSITE-ProRule" id="PRU01027"/>
    </source>
</evidence>
<evidence type="ECO:0000256" key="9">
    <source>
        <dbReference type="SAM" id="MobiDB-lite"/>
    </source>
</evidence>
<evidence type="ECO:0000269" key="10">
    <source>
    </source>
</evidence>
<reference key="1">
    <citation type="journal article" date="1991" name="Virology">
        <title>Molecular evolution of eastern equine encephalomyelitis virus in North America.</title>
        <authorList>
            <person name="Weaver S.C."/>
            <person name="Scott T.W."/>
            <person name="Rico-Hesse R."/>
        </authorList>
    </citation>
    <scope>NUCLEOTIDE SEQUENCE [GENOMIC RNA]</scope>
</reference>
<reference key="2">
    <citation type="journal article" date="2018" name="Cell Rep.">
        <title>Cryo-EM structures of eastern equine encephalitis virus reveal mechanisms of virus disassembly and antibody neutralization.</title>
        <authorList>
            <person name="Hasan S.S."/>
            <person name="Sun C."/>
            <person name="Kim A.S."/>
            <person name="Watanabe Y."/>
            <person name="Chen C.L."/>
            <person name="Klose T."/>
            <person name="Buda G."/>
            <person name="Crispin M."/>
            <person name="Diamond M.S."/>
            <person name="Klimstra W.B."/>
            <person name="Rossmann M.G."/>
        </authorList>
    </citation>
    <scope>STRUCTURE BY ELECTRON MICROSCOPY (4.4 ANGSTROMS) OF 1-260</scope>
    <scope>RNA-BINDING (CAPSID PROTEIN)</scope>
    <scope>FUNCTION (CAPSID PROTEIN)</scope>
</reference>